<gene>
    <name evidence="5" type="primary">slmA1</name>
    <name evidence="7" type="ordered locus">Mbar_A1758</name>
</gene>
<reference key="1">
    <citation type="journal article" date="2006" name="J. Bacteriol.">
        <title>The Methanosarcina barkeri genome: comparative analysis with Methanosarcina acetivorans and Methanosarcina mazei reveals extensive rearrangement within methanosarcinal genomes.</title>
        <authorList>
            <person name="Maeder D.L."/>
            <person name="Anderson I."/>
            <person name="Brettin T.S."/>
            <person name="Bruce D.C."/>
            <person name="Gilna P."/>
            <person name="Han C.S."/>
            <person name="Lapidus A."/>
            <person name="Metcalf W.W."/>
            <person name="Saunders E."/>
            <person name="Tapia R."/>
            <person name="Sowers K.R."/>
        </authorList>
    </citation>
    <scope>NUCLEOTIDE SEQUENCE [LARGE SCALE GENOMIC DNA]</scope>
    <source>
        <strain>Fusaro / DSM 804</strain>
    </source>
</reference>
<reference key="2">
    <citation type="journal article" date="2012" name="Archaea">
        <title>Identification of the major expressed S-layer and cell surface-layer-related proteins in the model methanogenic archaea: Methanosarcina barkeri Fusaro and Methanosarcina acetivorans C2A.</title>
        <authorList>
            <person name="Rohlin L."/>
            <person name="Leon D.R."/>
            <person name="Kim U."/>
            <person name="Loo J.A."/>
            <person name="Ogorzalek Loo R.R."/>
            <person name="Gunsalus R.P."/>
        </authorList>
    </citation>
    <scope>IDENTIFICATION BY MASS SPECTROMETRY</scope>
    <scope>FUNCTION</scope>
    <scope>SUBCELLULAR LOCATION</scope>
    <scope>GLYCOSYLATION</scope>
    <source>
        <strain>Fusaro / DSM 804</strain>
    </source>
</reference>
<organism>
    <name type="scientific">Methanosarcina barkeri (strain Fusaro / DSM 804)</name>
    <dbReference type="NCBI Taxonomy" id="269797"/>
    <lineage>
        <taxon>Archaea</taxon>
        <taxon>Methanobacteriati</taxon>
        <taxon>Methanobacteriota</taxon>
        <taxon>Stenosarchaea group</taxon>
        <taxon>Methanomicrobia</taxon>
        <taxon>Methanosarcinales</taxon>
        <taxon>Methanosarcinaceae</taxon>
        <taxon>Methanosarcina</taxon>
    </lineage>
</organism>
<feature type="signal peptide" evidence="4">
    <location>
        <begin position="1"/>
        <end position="24"/>
    </location>
</feature>
<feature type="chain" id="PRO_0000444299" description="Major S-layer protein">
    <location>
        <begin position="25"/>
        <end position="668"/>
    </location>
</feature>
<feature type="transmembrane region" description="Helical" evidence="1">
    <location>
        <begin position="644"/>
        <end position="664"/>
    </location>
</feature>
<feature type="region of interest" description="Disordered" evidence="3">
    <location>
        <begin position="584"/>
        <end position="650"/>
    </location>
</feature>
<feature type="compositionally biased region" description="Polar residues" evidence="3">
    <location>
        <begin position="596"/>
        <end position="611"/>
    </location>
</feature>
<feature type="compositionally biased region" description="Acidic residues" evidence="3">
    <location>
        <begin position="631"/>
        <end position="641"/>
    </location>
</feature>
<feature type="glycosylation site" description="N-linked (GlcNAc...) asparagine" evidence="2">
    <location>
        <position position="36"/>
    </location>
</feature>
<feature type="glycosylation site" description="N-linked (GlcNAc...) asparagine" evidence="2">
    <location>
        <position position="65"/>
    </location>
</feature>
<feature type="glycosylation site" description="N-linked (GlcNAc...) asparagine" evidence="2">
    <location>
        <position position="111"/>
    </location>
</feature>
<feature type="glycosylation site" description="N-linked (GlcNAc...) asparagine" evidence="2">
    <location>
        <position position="265"/>
    </location>
</feature>
<feature type="glycosylation site" description="N-linked (GlcNAc...) asparagine" evidence="2">
    <location>
        <position position="583"/>
    </location>
</feature>
<feature type="glycosylation site" description="N-linked (GlcNAc...) asparagine" evidence="2">
    <location>
        <position position="596"/>
    </location>
</feature>
<feature type="glycosylation site" description="N-linked (GlcNAc...) asparagine" evidence="2">
    <location>
        <position position="602"/>
    </location>
</feature>
<feature type="glycosylation site" description="N-linked (GlcNAc...) asparagine" evidence="2">
    <location>
        <position position="608"/>
    </location>
</feature>
<feature type="glycosylation site" description="N-linked (GlcNAc...) asparagine" evidence="2">
    <location>
        <position position="617"/>
    </location>
</feature>
<feature type="glycosylation site" description="N-linked (GlcNAc...) asparagine" evidence="2">
    <location>
        <position position="635"/>
    </location>
</feature>
<accession>Q46BP2</accession>
<evidence type="ECO:0000255" key="1"/>
<evidence type="ECO:0000255" key="2">
    <source>
        <dbReference type="PROSITE-ProRule" id="PRU00498"/>
    </source>
</evidence>
<evidence type="ECO:0000256" key="3">
    <source>
        <dbReference type="SAM" id="MobiDB-lite"/>
    </source>
</evidence>
<evidence type="ECO:0000269" key="4">
    <source>
    </source>
</evidence>
<evidence type="ECO:0000303" key="5">
    <source>
    </source>
</evidence>
<evidence type="ECO:0000305" key="6"/>
<evidence type="ECO:0000312" key="7">
    <source>
        <dbReference type="EMBL" id="AAZ70700.1"/>
    </source>
</evidence>
<dbReference type="EMBL" id="CP000099">
    <property type="protein sequence ID" value="AAZ70700.1"/>
    <property type="molecule type" value="Genomic_DNA"/>
</dbReference>
<dbReference type="SMR" id="Q46BP2"/>
<dbReference type="STRING" id="269797.Mbar_A1758"/>
<dbReference type="GlyCosmos" id="Q46BP2">
    <property type="glycosylation" value="10 sites, No reported glycans"/>
</dbReference>
<dbReference type="PaxDb" id="269797-Mbar_A1758"/>
<dbReference type="KEGG" id="mba:Mbar_A1758"/>
<dbReference type="eggNOG" id="arCOG03259">
    <property type="taxonomic scope" value="Archaea"/>
</dbReference>
<dbReference type="HOGENOM" id="CLU_014690_0_0_2"/>
<dbReference type="OrthoDB" id="137508at2157"/>
<dbReference type="GO" id="GO:0005576">
    <property type="term" value="C:extracellular region"/>
    <property type="evidence" value="ECO:0007669"/>
    <property type="project" value="UniProtKB-KW"/>
</dbReference>
<dbReference type="GO" id="GO:0005886">
    <property type="term" value="C:plasma membrane"/>
    <property type="evidence" value="ECO:0007669"/>
    <property type="project" value="UniProtKB-SubCell"/>
</dbReference>
<dbReference type="GO" id="GO:0030115">
    <property type="term" value="C:S-layer"/>
    <property type="evidence" value="ECO:0007669"/>
    <property type="project" value="UniProtKB-SubCell"/>
</dbReference>
<dbReference type="GO" id="GO:0071555">
    <property type="term" value="P:cell wall organization"/>
    <property type="evidence" value="ECO:0007669"/>
    <property type="project" value="UniProtKB-KW"/>
</dbReference>
<dbReference type="Gene3D" id="2.60.40.4190">
    <property type="match status" value="2"/>
</dbReference>
<dbReference type="Gene3D" id="2.60.98.40">
    <property type="match status" value="2"/>
</dbReference>
<dbReference type="InterPro" id="IPR026371">
    <property type="entry name" value="PGF_CTERM"/>
</dbReference>
<dbReference type="InterPro" id="IPR006457">
    <property type="entry name" value="S_layer-rel_Mac"/>
</dbReference>
<dbReference type="NCBIfam" id="TIGR04126">
    <property type="entry name" value="PGF_CTERM"/>
    <property type="match status" value="1"/>
</dbReference>
<dbReference type="NCBIfam" id="TIGR01567">
    <property type="entry name" value="S_layer_rel_Mac"/>
    <property type="match status" value="2"/>
</dbReference>
<dbReference type="Pfam" id="PF18204">
    <property type="entry name" value="PGF-CTERM"/>
    <property type="match status" value="1"/>
</dbReference>
<dbReference type="Pfam" id="PF07752">
    <property type="entry name" value="S-layer"/>
    <property type="match status" value="2"/>
</dbReference>
<sequence>MKRFAAVTLAALMLLTVFASAASAADSVEIRGPVFNGSNIVEIVGDGITIDATQFAAFYYDIDDNVTTETLSIKDVSGNSGNVIGEGGIVYSTKIQKVDYEYYKPSLGWDNYSLLGFFAEKYIPLKSNSADKLAKLVIDSDDKITLRTGETLDIGQGYTLQAKQVDVDGEKVWLEFDRDGEYVDDEIIEVGADDSTWDVELDDIQDEDDVTVMRVHVNQVFQGAVDSIAQIEGIWLIDYANAMTIESDDEFGDLDDVSINGDTLNITNEDTFTLTRDSTNELAEGLSFKVADTSSNVLRFYLAKEFTDPGTYEVRGSVASGEASWDASNFAGFYYDLDDNVETESLSVSELNGNVIGEGGLVYTTSIKKVDYDYENEDAGWDQYPIIGFFAEEYIPLKANSADKLAKLVLDSDDKITLRTGETFDLGEGYSIQAKQVDVDGEKVWLEFDKDGEYVDDEIIEVGSNSDNTWDVELDDIEDEDDVVVLKVHVNQVFRGAVDSIAQIEGIWLIDYANAMTIESDDEFGDLDDVSIQGDTLKISNEDTFTLTRDSDEDIGEGMYFKVADTPTSELRYYPAIERIVGNETTSITKPDESGNETVSDNETMPDNTSSETPDLNETDTPEEPTTTPEEPTDNETEPDESNGSPGFGVVLGLAGLLGVVYLVRRNN</sequence>
<name>CSG_METBF</name>
<keyword id="KW-1003">Cell membrane</keyword>
<keyword id="KW-0134">Cell wall</keyword>
<keyword id="KW-0961">Cell wall biogenesis/degradation</keyword>
<keyword id="KW-0325">Glycoprotein</keyword>
<keyword id="KW-0472">Membrane</keyword>
<keyword id="KW-0701">S-layer</keyword>
<keyword id="KW-0964">Secreted</keyword>
<keyword id="KW-0732">Signal</keyword>
<keyword id="KW-0812">Transmembrane</keyword>
<keyword id="KW-1133">Transmembrane helix</keyword>
<comment type="function">
    <text evidence="4">S-layer protein. The S-layer is a paracrystalline mono-layered assembly of proteins which coat the surface of the cell.</text>
</comment>
<comment type="subcellular location">
    <subcellularLocation>
        <location evidence="4">Secreted</location>
        <location evidence="4">Cell wall</location>
        <location evidence="4">S-layer</location>
    </subcellularLocation>
    <subcellularLocation>
        <location evidence="6">Cell membrane</location>
    </subcellularLocation>
</comment>
<comment type="PTM">
    <text evidence="4">Glycosylated.</text>
</comment>
<comment type="similarity">
    <text evidence="6">Belongs to the Methanosarcinales S-layer protein family.</text>
</comment>
<proteinExistence type="evidence at protein level"/>
<protein>
    <recommendedName>
        <fullName evidence="5">Major S-layer protein</fullName>
    </recommendedName>
    <alternativeName>
        <fullName evidence="6">Cell surface glycoprotein</fullName>
    </alternativeName>
</protein>